<evidence type="ECO:0000255" key="1">
    <source>
        <dbReference type="HAMAP-Rule" id="MF_01356"/>
    </source>
</evidence>
<keyword id="KW-0004">4Fe-4S</keyword>
<keyword id="KW-0997">Cell inner membrane</keyword>
<keyword id="KW-1003">Cell membrane</keyword>
<keyword id="KW-0408">Iron</keyword>
<keyword id="KW-0411">Iron-sulfur</keyword>
<keyword id="KW-0472">Membrane</keyword>
<keyword id="KW-0479">Metal-binding</keyword>
<keyword id="KW-0520">NAD</keyword>
<keyword id="KW-0874">Quinone</keyword>
<keyword id="KW-1278">Translocase</keyword>
<keyword id="KW-0813">Transport</keyword>
<keyword id="KW-0830">Ubiquinone</keyword>
<organism>
    <name type="scientific">Escherichia coli O9:H4 (strain HS)</name>
    <dbReference type="NCBI Taxonomy" id="331112"/>
    <lineage>
        <taxon>Bacteria</taxon>
        <taxon>Pseudomonadati</taxon>
        <taxon>Pseudomonadota</taxon>
        <taxon>Gammaproteobacteria</taxon>
        <taxon>Enterobacterales</taxon>
        <taxon>Enterobacteriaceae</taxon>
        <taxon>Escherichia</taxon>
    </lineage>
</organism>
<protein>
    <recommendedName>
        <fullName evidence="1">NADH-quinone oxidoreductase subunit B</fullName>
        <ecNumber evidence="1">7.1.1.-</ecNumber>
    </recommendedName>
    <alternativeName>
        <fullName evidence="1">NADH dehydrogenase I subunit B</fullName>
    </alternativeName>
    <alternativeName>
        <fullName evidence="1">NDH-1 subunit B</fullName>
    </alternativeName>
</protein>
<name>NUOB_ECOHS</name>
<dbReference type="EC" id="7.1.1.-" evidence="1"/>
<dbReference type="EMBL" id="CP000802">
    <property type="protein sequence ID" value="ABV06710.1"/>
    <property type="molecule type" value="Genomic_DNA"/>
</dbReference>
<dbReference type="RefSeq" id="WP_000386733.1">
    <property type="nucleotide sequence ID" value="NC_009800.1"/>
</dbReference>
<dbReference type="SMR" id="A8A2F6"/>
<dbReference type="GeneID" id="93774887"/>
<dbReference type="KEGG" id="ecx:EcHS_A2436"/>
<dbReference type="HOGENOM" id="CLU_055737_7_3_6"/>
<dbReference type="GO" id="GO:0005886">
    <property type="term" value="C:plasma membrane"/>
    <property type="evidence" value="ECO:0007669"/>
    <property type="project" value="UniProtKB-SubCell"/>
</dbReference>
<dbReference type="GO" id="GO:0045271">
    <property type="term" value="C:respiratory chain complex I"/>
    <property type="evidence" value="ECO:0007669"/>
    <property type="project" value="TreeGrafter"/>
</dbReference>
<dbReference type="GO" id="GO:0051539">
    <property type="term" value="F:4 iron, 4 sulfur cluster binding"/>
    <property type="evidence" value="ECO:0007669"/>
    <property type="project" value="UniProtKB-KW"/>
</dbReference>
<dbReference type="GO" id="GO:0005506">
    <property type="term" value="F:iron ion binding"/>
    <property type="evidence" value="ECO:0007669"/>
    <property type="project" value="UniProtKB-UniRule"/>
</dbReference>
<dbReference type="GO" id="GO:0008137">
    <property type="term" value="F:NADH dehydrogenase (ubiquinone) activity"/>
    <property type="evidence" value="ECO:0007669"/>
    <property type="project" value="InterPro"/>
</dbReference>
<dbReference type="GO" id="GO:0050136">
    <property type="term" value="F:NADH:ubiquinone reductase (non-electrogenic) activity"/>
    <property type="evidence" value="ECO:0007669"/>
    <property type="project" value="UniProtKB-UniRule"/>
</dbReference>
<dbReference type="GO" id="GO:0048038">
    <property type="term" value="F:quinone binding"/>
    <property type="evidence" value="ECO:0007669"/>
    <property type="project" value="UniProtKB-KW"/>
</dbReference>
<dbReference type="GO" id="GO:0009060">
    <property type="term" value="P:aerobic respiration"/>
    <property type="evidence" value="ECO:0007669"/>
    <property type="project" value="TreeGrafter"/>
</dbReference>
<dbReference type="GO" id="GO:0015990">
    <property type="term" value="P:electron transport coupled proton transport"/>
    <property type="evidence" value="ECO:0007669"/>
    <property type="project" value="TreeGrafter"/>
</dbReference>
<dbReference type="FunFam" id="3.40.50.12280:FF:000002">
    <property type="entry name" value="NADH-quinone oxidoreductase subunit B"/>
    <property type="match status" value="1"/>
</dbReference>
<dbReference type="Gene3D" id="3.40.50.12280">
    <property type="match status" value="1"/>
</dbReference>
<dbReference type="HAMAP" id="MF_01356">
    <property type="entry name" value="NDH1_NuoB"/>
    <property type="match status" value="1"/>
</dbReference>
<dbReference type="InterPro" id="IPR006137">
    <property type="entry name" value="NADH_UbQ_OxRdtase-like_20kDa"/>
</dbReference>
<dbReference type="InterPro" id="IPR006138">
    <property type="entry name" value="NADH_UQ_OxRdtase_20Kd_su"/>
</dbReference>
<dbReference type="NCBIfam" id="TIGR01957">
    <property type="entry name" value="nuoB_fam"/>
    <property type="match status" value="1"/>
</dbReference>
<dbReference type="NCBIfam" id="NF005012">
    <property type="entry name" value="PRK06411.1"/>
    <property type="match status" value="1"/>
</dbReference>
<dbReference type="PANTHER" id="PTHR11995">
    <property type="entry name" value="NADH DEHYDROGENASE"/>
    <property type="match status" value="1"/>
</dbReference>
<dbReference type="PANTHER" id="PTHR11995:SF14">
    <property type="entry name" value="NADH DEHYDROGENASE [UBIQUINONE] IRON-SULFUR PROTEIN 7, MITOCHONDRIAL"/>
    <property type="match status" value="1"/>
</dbReference>
<dbReference type="Pfam" id="PF01058">
    <property type="entry name" value="Oxidored_q6"/>
    <property type="match status" value="1"/>
</dbReference>
<dbReference type="SUPFAM" id="SSF56770">
    <property type="entry name" value="HydA/Nqo6-like"/>
    <property type="match status" value="1"/>
</dbReference>
<dbReference type="PROSITE" id="PS01150">
    <property type="entry name" value="COMPLEX1_20K"/>
    <property type="match status" value="1"/>
</dbReference>
<comment type="function">
    <text evidence="1">NDH-1 shuttles electrons from NADH, via FMN and iron-sulfur (Fe-S) centers, to quinones in the respiratory chain. The immediate electron acceptor for the enzyme in this species is believed to be ubiquinone. Couples the redox reaction to proton translocation (for every two electrons transferred, four hydrogen ions are translocated across the cytoplasmic membrane), and thus conserves the redox energy in a proton gradient.</text>
</comment>
<comment type="catalytic activity">
    <reaction evidence="1">
        <text>a quinone + NADH + 5 H(+)(in) = a quinol + NAD(+) + 4 H(+)(out)</text>
        <dbReference type="Rhea" id="RHEA:57888"/>
        <dbReference type="ChEBI" id="CHEBI:15378"/>
        <dbReference type="ChEBI" id="CHEBI:24646"/>
        <dbReference type="ChEBI" id="CHEBI:57540"/>
        <dbReference type="ChEBI" id="CHEBI:57945"/>
        <dbReference type="ChEBI" id="CHEBI:132124"/>
    </reaction>
</comment>
<comment type="cofactor">
    <cofactor evidence="1">
        <name>[4Fe-4S] cluster</name>
        <dbReference type="ChEBI" id="CHEBI:49883"/>
    </cofactor>
    <text evidence="1">Binds 1 [4Fe-4S] cluster.</text>
</comment>
<comment type="subunit">
    <text evidence="1">NDH-1 is composed of 13 different subunits. Subunits NuoB, CD, E, F, and G constitute the peripheral sector of the complex.</text>
</comment>
<comment type="subcellular location">
    <subcellularLocation>
        <location evidence="1">Cell inner membrane</location>
        <topology evidence="1">Peripheral membrane protein</topology>
        <orientation evidence="1">Cytoplasmic side</orientation>
    </subcellularLocation>
</comment>
<comment type="similarity">
    <text evidence="1">Belongs to the complex I 20 kDa subunit family.</text>
</comment>
<sequence>MDYTLTRIDPNGENDRYPLQKQEIVTDPLEQEVNKNVFMGKLNDMVNWGRKNSIWPYNFGLSCCYVEMVTSFTAVHDVARFGAEVLRASPRQADLMVVAGTCFTKMAPVIQRLYDQMLEPKWVISMGACANSGGMYDIYSVVQGVDKFIPVDVYIPGCPPRPEAYMQALMLLQESIGKERRPLSWVVGDQGVYRANMQSERERKRGERIAVTNLRTPDEI</sequence>
<reference key="1">
    <citation type="journal article" date="2008" name="J. Bacteriol.">
        <title>The pangenome structure of Escherichia coli: comparative genomic analysis of E. coli commensal and pathogenic isolates.</title>
        <authorList>
            <person name="Rasko D.A."/>
            <person name="Rosovitz M.J."/>
            <person name="Myers G.S.A."/>
            <person name="Mongodin E.F."/>
            <person name="Fricke W.F."/>
            <person name="Gajer P."/>
            <person name="Crabtree J."/>
            <person name="Sebaihia M."/>
            <person name="Thomson N.R."/>
            <person name="Chaudhuri R."/>
            <person name="Henderson I.R."/>
            <person name="Sperandio V."/>
            <person name="Ravel J."/>
        </authorList>
    </citation>
    <scope>NUCLEOTIDE SEQUENCE [LARGE SCALE GENOMIC DNA]</scope>
    <source>
        <strain>HS</strain>
    </source>
</reference>
<gene>
    <name evidence="1" type="primary">nuoB</name>
    <name type="ordered locus">EcHS_A2436</name>
</gene>
<feature type="chain" id="PRO_0000376222" description="NADH-quinone oxidoreductase subunit B">
    <location>
        <begin position="1"/>
        <end position="220"/>
    </location>
</feature>
<feature type="binding site" evidence="1">
    <location>
        <position position="63"/>
    </location>
    <ligand>
        <name>[4Fe-4S] cluster</name>
        <dbReference type="ChEBI" id="CHEBI:49883"/>
    </ligand>
</feature>
<feature type="binding site" evidence="1">
    <location>
        <position position="64"/>
    </location>
    <ligand>
        <name>[4Fe-4S] cluster</name>
        <dbReference type="ChEBI" id="CHEBI:49883"/>
    </ligand>
</feature>
<feature type="binding site" evidence="1">
    <location>
        <position position="129"/>
    </location>
    <ligand>
        <name>[4Fe-4S] cluster</name>
        <dbReference type="ChEBI" id="CHEBI:49883"/>
    </ligand>
</feature>
<feature type="binding site" evidence="1">
    <location>
        <position position="158"/>
    </location>
    <ligand>
        <name>[4Fe-4S] cluster</name>
        <dbReference type="ChEBI" id="CHEBI:49883"/>
    </ligand>
</feature>
<accession>A8A2F6</accession>
<proteinExistence type="inferred from homology"/>